<gene>
    <name type="ordered locus">Tfu_3078</name>
</gene>
<keyword id="KW-0002">3D-structure</keyword>
<keyword id="KW-0349">Heme</keyword>
<keyword id="KW-0408">Iron</keyword>
<keyword id="KW-0479">Metal-binding</keyword>
<keyword id="KW-0560">Oxidoreductase</keyword>
<keyword id="KW-0575">Peroxidase</keyword>
<keyword id="KW-0964">Secreted</keyword>
<keyword id="KW-0732">Signal</keyword>
<organism>
    <name type="scientific">Thermobifida fusca (strain YX)</name>
    <dbReference type="NCBI Taxonomy" id="269800"/>
    <lineage>
        <taxon>Bacteria</taxon>
        <taxon>Bacillati</taxon>
        <taxon>Actinomycetota</taxon>
        <taxon>Actinomycetes</taxon>
        <taxon>Streptosporangiales</taxon>
        <taxon>Nocardiopsidaceae</taxon>
        <taxon>Thermobifida</taxon>
    </lineage>
</organism>
<protein>
    <recommendedName>
        <fullName>Dye-decolorizing peroxidase Tfu_3078</fullName>
        <shortName>DyP</shortName>
        <ecNumber>1.11.1.19</ecNumber>
    </recommendedName>
    <alternativeName>
        <fullName>Peroxidase Tfu_3078</fullName>
    </alternativeName>
</protein>
<comment type="function">
    <text evidence="3">Peroxidase that is able to convert a large number of compounds, but its physiological substrate is not known. Shows high reactivity towards anthraquinone dyes (e.g. Reactive Blue 19) and a modest activity towards standard peroxidase substrates (such as guaiacol and 2,6-dimethoxyphenol) and azo dyes (e.g. Reactive Blue 5). Is also able to oxidize aromatic sulfides enantioselectively, resulting in the corresponding (R)-sulfoxides, but with a poor efficiency. Does not display catalase activity.</text>
</comment>
<comment type="catalytic activity">
    <reaction>
        <text>Reactive Blue 5 + 2 H2O2 = 2,2'-disulfonyl azobenzene + 3-[(4-amino-6-chloro-1,3,5-triazin-2-yl)amino]benzenesulfonate + phthalate + 2 H2O + 2 H(+)</text>
        <dbReference type="Rhea" id="RHEA:28086"/>
        <dbReference type="ChEBI" id="CHEBI:15377"/>
        <dbReference type="ChEBI" id="CHEBI:15378"/>
        <dbReference type="ChEBI" id="CHEBI:16240"/>
        <dbReference type="ChEBI" id="CHEBI:17563"/>
        <dbReference type="ChEBI" id="CHEBI:63950"/>
        <dbReference type="ChEBI" id="CHEBI:63955"/>
        <dbReference type="ChEBI" id="CHEBI:64278"/>
        <dbReference type="EC" id="1.11.1.19"/>
    </reaction>
</comment>
<comment type="cofactor">
    <cofactor evidence="3">
        <name>heme b</name>
        <dbReference type="ChEBI" id="CHEBI:60344"/>
    </cofactor>
    <text evidence="3">Binds 1 heme b (iron(II)-protoporphyrin IX) group non-covalently.</text>
</comment>
<comment type="biophysicochemical properties">
    <kinetics>
        <KM evidence="3">29 uM for Reactive Blue 19</KM>
        <KM evidence="3">27 uM for H(2)O(2)</KM>
        <text>kcat is 10 sec(-1) with Reactive Blue 19 as substrate.</text>
    </kinetics>
    <phDependence>
        <text evidence="3">Optimum pH is 3.5 with Reactive Blue 19 as substrate.</text>
    </phDependence>
    <temperatureDependence>
        <text evidence="3">Optimum temperature is about 25 degrees Celsius. Thermostable. Retains 50% of its activity after heating 2 hours at 60 degrees Celsius, while no decrease in activity is observed within the same time at 30 or 40 degrees Celsius.</text>
    </temperatureDependence>
</comment>
<comment type="subunit">
    <text evidence="3">Monomer.</text>
</comment>
<comment type="subcellular location">
    <subcellularLocation>
        <location evidence="5">Secreted</location>
    </subcellularLocation>
</comment>
<comment type="PTM">
    <text>Exported by the Tat system. The position of the signal peptide cleavage has not been experimentally proven.</text>
</comment>
<comment type="similarity">
    <text evidence="4">Belongs to the DyP-type peroxidase family.</text>
</comment>
<dbReference type="EC" id="1.11.1.19"/>
<dbReference type="EMBL" id="CP000088">
    <property type="protein sequence ID" value="AAZ57111.1"/>
    <property type="molecule type" value="Genomic_DNA"/>
</dbReference>
<dbReference type="RefSeq" id="WP_011293495.1">
    <property type="nucleotide sequence ID" value="NC_007333.1"/>
</dbReference>
<dbReference type="PDB" id="5FW4">
    <property type="method" value="X-ray"/>
    <property type="resolution" value="1.80 A"/>
    <property type="chains" value="A/B=1-430"/>
</dbReference>
<dbReference type="PDBsum" id="5FW4"/>
<dbReference type="SMR" id="Q47KB1"/>
<dbReference type="STRING" id="269800.Tfu_3078"/>
<dbReference type="KEGG" id="tfu:Tfu_3078"/>
<dbReference type="eggNOG" id="COG2837">
    <property type="taxonomic scope" value="Bacteria"/>
</dbReference>
<dbReference type="HOGENOM" id="CLU_039488_1_2_11"/>
<dbReference type="OrthoDB" id="9781066at2"/>
<dbReference type="BioCyc" id="MetaCyc:MONOMER-15995"/>
<dbReference type="BRENDA" id="1.11.1.19">
    <property type="organism ID" value="12263"/>
</dbReference>
<dbReference type="EvolutionaryTrace" id="Q47KB1"/>
<dbReference type="GO" id="GO:0005829">
    <property type="term" value="C:cytosol"/>
    <property type="evidence" value="ECO:0007669"/>
    <property type="project" value="TreeGrafter"/>
</dbReference>
<dbReference type="GO" id="GO:0005576">
    <property type="term" value="C:extracellular region"/>
    <property type="evidence" value="ECO:0007669"/>
    <property type="project" value="UniProtKB-SubCell"/>
</dbReference>
<dbReference type="GO" id="GO:0020037">
    <property type="term" value="F:heme binding"/>
    <property type="evidence" value="ECO:0000314"/>
    <property type="project" value="UniProtKB"/>
</dbReference>
<dbReference type="GO" id="GO:0046872">
    <property type="term" value="F:metal ion binding"/>
    <property type="evidence" value="ECO:0007669"/>
    <property type="project" value="UniProtKB-KW"/>
</dbReference>
<dbReference type="GO" id="GO:0004601">
    <property type="term" value="F:peroxidase activity"/>
    <property type="evidence" value="ECO:0000314"/>
    <property type="project" value="UniProtKB"/>
</dbReference>
<dbReference type="InterPro" id="IPR011008">
    <property type="entry name" value="Dimeric_a/b-barrel"/>
</dbReference>
<dbReference type="InterPro" id="IPR048328">
    <property type="entry name" value="Dyp_perox_C"/>
</dbReference>
<dbReference type="InterPro" id="IPR048327">
    <property type="entry name" value="Dyp_perox_N"/>
</dbReference>
<dbReference type="InterPro" id="IPR006314">
    <property type="entry name" value="Dyp_peroxidase"/>
</dbReference>
<dbReference type="InterPro" id="IPR006311">
    <property type="entry name" value="TAT_signal"/>
</dbReference>
<dbReference type="NCBIfam" id="TIGR01413">
    <property type="entry name" value="Dyp_perox_fam"/>
    <property type="match status" value="1"/>
</dbReference>
<dbReference type="PANTHER" id="PTHR30521:SF4">
    <property type="entry name" value="DEFERROCHELATASE"/>
    <property type="match status" value="1"/>
</dbReference>
<dbReference type="PANTHER" id="PTHR30521">
    <property type="entry name" value="DEFERROCHELATASE/PEROXIDASE"/>
    <property type="match status" value="1"/>
</dbReference>
<dbReference type="Pfam" id="PF20628">
    <property type="entry name" value="Dyp_perox_C"/>
    <property type="match status" value="1"/>
</dbReference>
<dbReference type="Pfam" id="PF04261">
    <property type="entry name" value="Dyp_perox_N"/>
    <property type="match status" value="1"/>
</dbReference>
<dbReference type="SUPFAM" id="SSF54909">
    <property type="entry name" value="Dimeric alpha+beta barrel"/>
    <property type="match status" value="1"/>
</dbReference>
<dbReference type="PROSITE" id="PS51404">
    <property type="entry name" value="DYP_PEROXIDASE"/>
    <property type="match status" value="1"/>
</dbReference>
<dbReference type="PROSITE" id="PS51318">
    <property type="entry name" value="TAT"/>
    <property type="match status" value="1"/>
</dbReference>
<accession>Q47KB1</accession>
<proteinExistence type="evidence at protein level"/>
<feature type="signal peptide" description="Tat-type signal" evidence="1">
    <location>
        <begin position="1"/>
        <end position="39"/>
    </location>
</feature>
<feature type="chain" id="PRO_5000099631" description="Dye-decolorizing peroxidase Tfu_3078">
    <location>
        <begin position="40"/>
        <end position="430"/>
    </location>
</feature>
<feature type="region of interest" description="Disordered" evidence="2">
    <location>
        <begin position="42"/>
        <end position="75"/>
    </location>
</feature>
<feature type="compositionally biased region" description="Low complexity" evidence="2">
    <location>
        <begin position="60"/>
        <end position="69"/>
    </location>
</feature>
<feature type="active site" description="Proton acceptor" evidence="5">
    <location>
        <position position="242"/>
    </location>
</feature>
<feature type="binding site" description="proximal binding residue" evidence="4">
    <location>
        <position position="338"/>
    </location>
    <ligand>
        <name>heme</name>
        <dbReference type="ChEBI" id="CHEBI:30413"/>
    </ligand>
    <ligandPart>
        <name>Fe</name>
        <dbReference type="ChEBI" id="CHEBI:18248"/>
    </ligandPart>
</feature>
<feature type="mutagenesis site" description="0.7% of wild-type catalytic activity. Still able to bind heme." evidence="3">
    <original>D</original>
    <variation>A</variation>
    <location>
        <position position="242"/>
    </location>
</feature>
<feature type="mutagenesis site" description="Lacks the heme cofactor. 3% of wild-type catalytic activity." evidence="3">
    <original>H</original>
    <variation>A</variation>
    <location>
        <position position="338"/>
    </location>
</feature>
<feature type="helix" evidence="6">
    <location>
        <begin position="51"/>
        <end position="61"/>
    </location>
</feature>
<feature type="strand" evidence="6">
    <location>
        <begin position="72"/>
        <end position="76"/>
    </location>
</feature>
<feature type="strand" evidence="6">
    <location>
        <begin position="80"/>
        <end position="89"/>
    </location>
</feature>
<feature type="helix" evidence="6">
    <location>
        <begin position="91"/>
        <end position="94"/>
    </location>
</feature>
<feature type="helix" evidence="6">
    <location>
        <begin position="97"/>
        <end position="120"/>
    </location>
</feature>
<feature type="helix" evidence="6">
    <location>
        <begin position="123"/>
        <end position="126"/>
    </location>
</feature>
<feature type="turn" evidence="6">
    <location>
        <begin position="131"/>
        <end position="134"/>
    </location>
</feature>
<feature type="strand" evidence="6">
    <location>
        <begin position="141"/>
        <end position="146"/>
    </location>
</feature>
<feature type="helix" evidence="6">
    <location>
        <begin position="148"/>
        <end position="153"/>
    </location>
</feature>
<feature type="helix" evidence="6">
    <location>
        <begin position="157"/>
        <end position="159"/>
    </location>
</feature>
<feature type="helix" evidence="6">
    <location>
        <begin position="162"/>
        <end position="164"/>
    </location>
</feature>
<feature type="helix" evidence="6">
    <location>
        <begin position="177"/>
        <end position="179"/>
    </location>
</feature>
<feature type="strand" evidence="6">
    <location>
        <begin position="183"/>
        <end position="192"/>
    </location>
</feature>
<feature type="helix" evidence="6">
    <location>
        <begin position="193"/>
        <end position="205"/>
    </location>
</feature>
<feature type="turn" evidence="6">
    <location>
        <begin position="206"/>
        <end position="210"/>
    </location>
</feature>
<feature type="strand" evidence="6">
    <location>
        <begin position="211"/>
        <end position="220"/>
    </location>
</feature>
<feature type="helix" evidence="6">
    <location>
        <begin position="224"/>
        <end position="226"/>
    </location>
</feature>
<feature type="helix" evidence="6">
    <location>
        <begin position="252"/>
        <end position="258"/>
    </location>
</feature>
<feature type="turn" evidence="6">
    <location>
        <begin position="266"/>
        <end position="268"/>
    </location>
</feature>
<feature type="helix" evidence="6">
    <location>
        <begin position="269"/>
        <end position="271"/>
    </location>
</feature>
<feature type="strand" evidence="6">
    <location>
        <begin position="275"/>
        <end position="284"/>
    </location>
</feature>
<feature type="helix" evidence="6">
    <location>
        <begin position="286"/>
        <end position="291"/>
    </location>
</feature>
<feature type="helix" evidence="6">
    <location>
        <begin position="294"/>
        <end position="301"/>
    </location>
</feature>
<feature type="turn" evidence="6">
    <location>
        <begin position="305"/>
        <end position="307"/>
    </location>
</feature>
<feature type="helix" evidence="6">
    <location>
        <begin position="338"/>
        <end position="342"/>
    </location>
</feature>
<feature type="helix" evidence="6">
    <location>
        <begin position="344"/>
        <end position="347"/>
    </location>
</feature>
<feature type="strand" evidence="6">
    <location>
        <begin position="357"/>
        <end position="363"/>
    </location>
</feature>
<feature type="helix" evidence="6">
    <location>
        <begin position="365"/>
        <end position="367"/>
    </location>
</feature>
<feature type="strand" evidence="6">
    <location>
        <begin position="369"/>
        <end position="380"/>
    </location>
</feature>
<feature type="helix" evidence="6">
    <location>
        <begin position="382"/>
        <end position="384"/>
    </location>
</feature>
<feature type="helix" evidence="6">
    <location>
        <begin position="386"/>
        <end position="395"/>
    </location>
</feature>
<feature type="helix" evidence="6">
    <location>
        <begin position="401"/>
        <end position="403"/>
    </location>
</feature>
<feature type="strand" evidence="6">
    <location>
        <begin position="404"/>
        <end position="414"/>
    </location>
</feature>
<feature type="helix" evidence="6">
    <location>
        <begin position="425"/>
        <end position="428"/>
    </location>
</feature>
<name>DYP_THEFY</name>
<evidence type="ECO:0000255" key="1">
    <source>
        <dbReference type="PROSITE-ProRule" id="PRU00648"/>
    </source>
</evidence>
<evidence type="ECO:0000256" key="2">
    <source>
        <dbReference type="SAM" id="MobiDB-lite"/>
    </source>
</evidence>
<evidence type="ECO:0000269" key="3">
    <source>
    </source>
</evidence>
<evidence type="ECO:0000305" key="4"/>
<evidence type="ECO:0000305" key="5">
    <source>
    </source>
</evidence>
<evidence type="ECO:0007829" key="6">
    <source>
        <dbReference type="PDB" id="5FW4"/>
    </source>
</evidence>
<sequence length="430" mass="45928">MTEPDTERKGSSRRGFLAGLGAAALTGAGIGMAAGEVLRPLLPDSDPAASPEAEQRLRMAAQRADATAAPQPGISGPAPAFVHVIALDLAEEARKNPDTARDSAAAALRSWTELAARLHEESPHDIAEGAASAGLLPASLMVTVGIGGSLLSAIDAEDRRPDALADLPEFSTDDLHPRWCGGDFMLQVGAEDPMVLTAAVEELVAAAADATAVRWSLRGFRRTAAAARDPDATPRNLMGQIDGTANPAQDHPLFDRTITARPADNPAHAWMDGGSYLVVRRIRMLLTEWRKLDVAARERVIGRRLDTGAPLGSRNETDPVVLSARDEEGEPLIPENAHVRLASPENNLGARMFRRGYSYDQGWRDDGVRDAGLLFMAWQGDPATGFIPVQRSLADQGDALNRYIRHEGSALFAVPAAREGRYLGQDLIEG</sequence>
<reference key="1">
    <citation type="journal article" date="2007" name="J. Bacteriol.">
        <title>Genome sequence and analysis of the soil cellulolytic actinomycete Thermobifida fusca YX.</title>
        <authorList>
            <person name="Lykidis A."/>
            <person name="Mavromatis K."/>
            <person name="Ivanova N."/>
            <person name="Anderson I."/>
            <person name="Land M."/>
            <person name="DiBartolo G."/>
            <person name="Martinez M."/>
            <person name="Lapidus A."/>
            <person name="Lucas S."/>
            <person name="Copeland A."/>
            <person name="Richardson P."/>
            <person name="Wilson D.B."/>
            <person name="Kyrpides N."/>
        </authorList>
    </citation>
    <scope>NUCLEOTIDE SEQUENCE [LARGE SCALE GENOMIC DNA]</scope>
    <source>
        <strain>YX</strain>
    </source>
</reference>
<reference key="2">
    <citation type="journal article" date="2010" name="Appl. Microbiol. Biotechnol.">
        <title>A robust and extracellular heme-containing peroxidase from Thermobifida fusca as prototype of a bacterial peroxidase superfamily.</title>
        <authorList>
            <person name="van Bloois E."/>
            <person name="Torres Pazmino D.E."/>
            <person name="Winter R.T."/>
            <person name="Fraaije M.W."/>
        </authorList>
    </citation>
    <scope>FUNCTION AS A PEROXIDASE</scope>
    <scope>SUBSTRATE SPECIFICITY</scope>
    <scope>COFACTOR</scope>
    <scope>BIOPHYSICOCHEMICAL PROPERTIES</scope>
    <scope>EXPORT VIA THE TAT-SYSTEM</scope>
    <scope>SUBCELLULAR LOCATION</scope>
    <scope>SUBUNIT</scope>
    <scope>ACTIVE SITES</scope>
    <scope>MUTAGENESIS OF ASP-242 AND HIS-338</scope>
</reference>